<keyword id="KW-0002">3D-structure</keyword>
<keyword id="KW-0472">Membrane</keyword>
<keyword id="KW-1185">Reference proteome</keyword>
<keyword id="KW-0762">Sugar transport</keyword>
<keyword id="KW-0769">Symport</keyword>
<keyword id="KW-0812">Transmembrane</keyword>
<keyword id="KW-1133">Transmembrane helix</keyword>
<keyword id="KW-0813">Transport</keyword>
<evidence type="ECO:0000255" key="1"/>
<evidence type="ECO:0000269" key="2">
    <source>
    </source>
</evidence>
<evidence type="ECO:0000305" key="3"/>
<evidence type="ECO:0007829" key="4">
    <source>
        <dbReference type="PDB" id="9G11"/>
    </source>
</evidence>
<gene>
    <name type="primary">STP6</name>
    <name type="ordered locus">At3g05960</name>
    <name type="ORF">F2O10.8</name>
</gene>
<name>STP6_ARATH</name>
<dbReference type="EMBL" id="AJ344337">
    <property type="protein sequence ID" value="CAC69073.1"/>
    <property type="molecule type" value="mRNA"/>
</dbReference>
<dbReference type="EMBL" id="AC013454">
    <property type="protein sequence ID" value="AAF23220.1"/>
    <property type="molecule type" value="Genomic_DNA"/>
</dbReference>
<dbReference type="EMBL" id="CP002686">
    <property type="protein sequence ID" value="AEE74323.1"/>
    <property type="molecule type" value="Genomic_DNA"/>
</dbReference>
<dbReference type="EMBL" id="AJ001659">
    <property type="protein sequence ID" value="CAA04904.1"/>
    <property type="molecule type" value="Genomic_DNA"/>
</dbReference>
<dbReference type="RefSeq" id="NP_187247.1">
    <property type="nucleotide sequence ID" value="NM_111470.2"/>
</dbReference>
<dbReference type="PDB" id="9G11">
    <property type="method" value="X-ray"/>
    <property type="resolution" value="3.20 A"/>
    <property type="chains" value="A=1-507"/>
</dbReference>
<dbReference type="PDBsum" id="9G11"/>
<dbReference type="SMR" id="Q9SFG0"/>
<dbReference type="FunCoup" id="Q9SFG0">
    <property type="interactions" value="98"/>
</dbReference>
<dbReference type="STRING" id="3702.Q9SFG0"/>
<dbReference type="TCDB" id="2.A.1.1.56">
    <property type="family name" value="the major facilitator superfamily (mfs)"/>
</dbReference>
<dbReference type="PaxDb" id="3702-AT3G05960.1"/>
<dbReference type="ProteomicsDB" id="228267"/>
<dbReference type="EnsemblPlants" id="AT3G05960.1">
    <property type="protein sequence ID" value="AT3G05960.1"/>
    <property type="gene ID" value="AT3G05960"/>
</dbReference>
<dbReference type="GeneID" id="819766"/>
<dbReference type="Gramene" id="AT3G05960.1">
    <property type="protein sequence ID" value="AT3G05960.1"/>
    <property type="gene ID" value="AT3G05960"/>
</dbReference>
<dbReference type="KEGG" id="ath:AT3G05960"/>
<dbReference type="Araport" id="AT3G05960"/>
<dbReference type="TAIR" id="AT3G05960">
    <property type="gene designation" value="STP6"/>
</dbReference>
<dbReference type="eggNOG" id="KOG0254">
    <property type="taxonomic scope" value="Eukaryota"/>
</dbReference>
<dbReference type="HOGENOM" id="CLU_001265_30_5_1"/>
<dbReference type="InParanoid" id="Q9SFG0"/>
<dbReference type="OMA" id="AISMIYV"/>
<dbReference type="OrthoDB" id="5296287at2759"/>
<dbReference type="PhylomeDB" id="Q9SFG0"/>
<dbReference type="PRO" id="PR:Q9SFG0"/>
<dbReference type="Proteomes" id="UP000006548">
    <property type="component" value="Chromosome 3"/>
</dbReference>
<dbReference type="ExpressionAtlas" id="Q9SFG0">
    <property type="expression patterns" value="baseline and differential"/>
</dbReference>
<dbReference type="GO" id="GO:0016020">
    <property type="term" value="C:membrane"/>
    <property type="evidence" value="ECO:0007669"/>
    <property type="project" value="UniProtKB-SubCell"/>
</dbReference>
<dbReference type="GO" id="GO:0015145">
    <property type="term" value="F:monosaccharide transmembrane transporter activity"/>
    <property type="evidence" value="ECO:0000314"/>
    <property type="project" value="TAIR"/>
</dbReference>
<dbReference type="GO" id="GO:0015293">
    <property type="term" value="F:symporter activity"/>
    <property type="evidence" value="ECO:0007669"/>
    <property type="project" value="UniProtKB-KW"/>
</dbReference>
<dbReference type="GO" id="GO:0034219">
    <property type="term" value="P:carbohydrate transmembrane transport"/>
    <property type="evidence" value="ECO:0000304"/>
    <property type="project" value="TAIR"/>
</dbReference>
<dbReference type="CDD" id="cd17361">
    <property type="entry name" value="MFS_STP"/>
    <property type="match status" value="1"/>
</dbReference>
<dbReference type="FunFam" id="1.20.1250.20:FF:000002">
    <property type="entry name" value="Sugar transport protein 13"/>
    <property type="match status" value="1"/>
</dbReference>
<dbReference type="Gene3D" id="1.20.1250.20">
    <property type="entry name" value="MFS general substrate transporter like domains"/>
    <property type="match status" value="1"/>
</dbReference>
<dbReference type="InterPro" id="IPR020846">
    <property type="entry name" value="MFS_dom"/>
</dbReference>
<dbReference type="InterPro" id="IPR044778">
    <property type="entry name" value="MFS_STP/MST-like_plant"/>
</dbReference>
<dbReference type="InterPro" id="IPR005828">
    <property type="entry name" value="MFS_sugar_transport-like"/>
</dbReference>
<dbReference type="InterPro" id="IPR036259">
    <property type="entry name" value="MFS_trans_sf"/>
</dbReference>
<dbReference type="InterPro" id="IPR045262">
    <property type="entry name" value="STP/PLT_plant"/>
</dbReference>
<dbReference type="InterPro" id="IPR003663">
    <property type="entry name" value="Sugar/inositol_transpt"/>
</dbReference>
<dbReference type="InterPro" id="IPR005829">
    <property type="entry name" value="Sugar_transporter_CS"/>
</dbReference>
<dbReference type="NCBIfam" id="TIGR00879">
    <property type="entry name" value="SP"/>
    <property type="match status" value="1"/>
</dbReference>
<dbReference type="PANTHER" id="PTHR23500">
    <property type="entry name" value="SOLUTE CARRIER FAMILY 2, FACILITATED GLUCOSE TRANSPORTER"/>
    <property type="match status" value="1"/>
</dbReference>
<dbReference type="PANTHER" id="PTHR23500:SF472">
    <property type="entry name" value="SUGAR TRANSPORT PROTEIN 6"/>
    <property type="match status" value="1"/>
</dbReference>
<dbReference type="Pfam" id="PF00083">
    <property type="entry name" value="Sugar_tr"/>
    <property type="match status" value="1"/>
</dbReference>
<dbReference type="PRINTS" id="PR00171">
    <property type="entry name" value="SUGRTRNSPORT"/>
</dbReference>
<dbReference type="SUPFAM" id="SSF103473">
    <property type="entry name" value="MFS general substrate transporter"/>
    <property type="match status" value="1"/>
</dbReference>
<dbReference type="PROSITE" id="PS50850">
    <property type="entry name" value="MFS"/>
    <property type="match status" value="1"/>
</dbReference>
<dbReference type="PROSITE" id="PS00217">
    <property type="entry name" value="SUGAR_TRANSPORT_2"/>
    <property type="match status" value="1"/>
</dbReference>
<protein>
    <recommendedName>
        <fullName>Sugar transport protein 6</fullName>
    </recommendedName>
    <alternativeName>
        <fullName>Hexose transporter 6</fullName>
    </alternativeName>
</protein>
<feature type="chain" id="PRO_0000050436" description="Sugar transport protein 6">
    <location>
        <begin position="1"/>
        <end position="507"/>
    </location>
</feature>
<feature type="topological domain" description="Cytoplasmic" evidence="1">
    <location>
        <begin position="1"/>
        <end position="20"/>
    </location>
</feature>
<feature type="transmembrane region" description="Helical; Name=1" evidence="1">
    <location>
        <begin position="21"/>
        <end position="41"/>
    </location>
</feature>
<feature type="transmembrane region" description="Helical; Name=2" evidence="1">
    <location>
        <begin position="78"/>
        <end position="98"/>
    </location>
</feature>
<feature type="transmembrane region" description="Helical; Name=3" evidence="1">
    <location>
        <begin position="115"/>
        <end position="135"/>
    </location>
</feature>
<feature type="transmembrane region" description="Helical; Name=4" evidence="1">
    <location>
        <begin position="138"/>
        <end position="158"/>
    </location>
</feature>
<feature type="transmembrane region" description="Helical; Name=5" evidence="1">
    <location>
        <begin position="165"/>
        <end position="185"/>
    </location>
</feature>
<feature type="transmembrane region" description="Helical; Name=6" evidence="1">
    <location>
        <begin position="199"/>
        <end position="219"/>
    </location>
</feature>
<feature type="transmembrane region" description="Helical; Name=7" evidence="1">
    <location>
        <begin position="280"/>
        <end position="300"/>
    </location>
</feature>
<feature type="transmembrane region" description="Helical; Name=8" evidence="1">
    <location>
        <begin position="318"/>
        <end position="338"/>
    </location>
</feature>
<feature type="transmembrane region" description="Helical; Name=9" evidence="1">
    <location>
        <begin position="345"/>
        <end position="365"/>
    </location>
</feature>
<feature type="transmembrane region" description="Helical; Name=10" evidence="1">
    <location>
        <begin position="381"/>
        <end position="401"/>
    </location>
</feature>
<feature type="transmembrane region" description="Helical; Name=11" evidence="1">
    <location>
        <begin position="418"/>
        <end position="438"/>
    </location>
</feature>
<feature type="transmembrane region" description="Helical; Name=12" evidence="1">
    <location>
        <begin position="447"/>
        <end position="467"/>
    </location>
</feature>
<feature type="topological domain" description="Cytoplasmic" evidence="1">
    <location>
        <begin position="468"/>
        <end position="507"/>
    </location>
</feature>
<feature type="helix" evidence="4">
    <location>
        <begin position="19"/>
        <end position="47"/>
    </location>
</feature>
<feature type="helix" evidence="4">
    <location>
        <begin position="49"/>
        <end position="54"/>
    </location>
</feature>
<feature type="helix" evidence="4">
    <location>
        <begin position="57"/>
        <end position="63"/>
    </location>
</feature>
<feature type="strand" evidence="4">
    <location>
        <begin position="65"/>
        <end position="67"/>
    </location>
</feature>
<feature type="helix" evidence="4">
    <location>
        <begin position="77"/>
        <end position="104"/>
    </location>
</feature>
<feature type="helix" evidence="4">
    <location>
        <begin position="106"/>
        <end position="125"/>
    </location>
</feature>
<feature type="helix" evidence="4">
    <location>
        <begin position="130"/>
        <end position="157"/>
    </location>
</feature>
<feature type="helix" evidence="4">
    <location>
        <begin position="164"/>
        <end position="190"/>
    </location>
</feature>
<feature type="turn" evidence="4">
    <location>
        <begin position="193"/>
        <end position="195"/>
    </location>
</feature>
<feature type="helix" evidence="4">
    <location>
        <begin position="196"/>
        <end position="202"/>
    </location>
</feature>
<feature type="helix" evidence="4">
    <location>
        <begin position="205"/>
        <end position="215"/>
    </location>
</feature>
<feature type="helix" evidence="4">
    <location>
        <begin position="222"/>
        <end position="228"/>
    </location>
</feature>
<feature type="turn" evidence="4">
    <location>
        <begin position="230"/>
        <end position="233"/>
    </location>
</feature>
<feature type="helix" evidence="4">
    <location>
        <begin position="234"/>
        <end position="241"/>
    </location>
</feature>
<feature type="helix" evidence="4">
    <location>
        <begin position="248"/>
        <end position="259"/>
    </location>
</feature>
<feature type="turn" evidence="4">
    <location>
        <begin position="261"/>
        <end position="265"/>
    </location>
</feature>
<feature type="helix" evidence="4">
    <location>
        <begin position="268"/>
        <end position="272"/>
    </location>
</feature>
<feature type="helix" evidence="4">
    <location>
        <begin position="277"/>
        <end position="292"/>
    </location>
</feature>
<feature type="helix" evidence="4">
    <location>
        <begin position="295"/>
        <end position="309"/>
    </location>
</feature>
<feature type="helix" evidence="4">
    <location>
        <begin position="313"/>
        <end position="340"/>
    </location>
</feature>
<feature type="helix" evidence="4">
    <location>
        <begin position="345"/>
        <end position="368"/>
    </location>
</feature>
<feature type="helix" evidence="4">
    <location>
        <begin position="377"/>
        <end position="395"/>
    </location>
</feature>
<feature type="helix" evidence="4">
    <location>
        <begin position="398"/>
        <end position="404"/>
    </location>
</feature>
<feature type="helix" evidence="4">
    <location>
        <begin position="406"/>
        <end position="409"/>
    </location>
</feature>
<feature type="helix" evidence="4">
    <location>
        <begin position="412"/>
        <end position="414"/>
    </location>
</feature>
<feature type="helix" evidence="4">
    <location>
        <begin position="416"/>
        <end position="443"/>
    </location>
</feature>
<feature type="strand" evidence="4">
    <location>
        <begin position="444"/>
        <end position="446"/>
    </location>
</feature>
<feature type="helix" evidence="4">
    <location>
        <begin position="447"/>
        <end position="466"/>
    </location>
</feature>
<feature type="helix" evidence="4">
    <location>
        <begin position="475"/>
        <end position="481"/>
    </location>
</feature>
<feature type="strand" evidence="4">
    <location>
        <begin position="483"/>
        <end position="485"/>
    </location>
</feature>
<sequence>MAVVVSNANAPAFEAKMTVYVFICVMIAAVGGLIFGYDIGISGGVSAMDDFLKEFFPAVWERKKHVHENNYCKYDNQFLQLFTSSLYLAALVASFVASATCSKLGRRPTMQFASIFFLIGVGLTAGAVNLVMLIIGRLFLGFGVGFGNQAVPLFLSEIAPAQLRGGLNIVFQLMVTIGILIANIVNYFTATVHPYGWRIALGGAGIPAVILLFGSLLIIETPTSLIERNKNEEGKEALRKIRGVDDINDEYESIVHACDIASQVKDPYRKLLKPASRPPFIIGMLLQLFQQFTGINAIMFYAPVLFQTVGFGSDAALLSAVITGSINVLATFVGIYLVDRTGRRFLLLQSSVHMLICQLIIGIILAKDLGVTGTLGRPQALVVVIFVCVYVMGFAWSWGPLGWLIPSETFPLETRSAGFAVAVSCNMFFTFVIAQAFLSMLCGMRSGIFFFFSGWIIVMGLFAFFFIPETKGIAIDDMRESVWKPHWFWKRYMLPEDDHHDIEKRNA</sequence>
<reference key="1">
    <citation type="journal article" date="2003" name="Plant Physiol.">
        <title>AtSTP6, a new pollen-specific H(+)-monosaccharide symporter from Arabidopsis.</title>
        <authorList>
            <person name="Scholz-Starke J."/>
            <person name="Buettner M."/>
            <person name="Sauer N."/>
        </authorList>
    </citation>
    <scope>NUCLEOTIDE SEQUENCE [MRNA]</scope>
    <scope>FUNCTION</scope>
    <scope>ACTIVITY REGULATION</scope>
    <scope>DEVELOPMENTAL STAGE</scope>
    <scope>BIOPHYSICOCHEMICAL PROPERTIES</scope>
    <scope>TISSUE SPECIFICITY</scope>
    <source>
        <strain>cv. Columbia</strain>
        <tissue>Flower</tissue>
    </source>
</reference>
<reference key="2">
    <citation type="journal article" date="2000" name="Nature">
        <title>Sequence and analysis of chromosome 3 of the plant Arabidopsis thaliana.</title>
        <authorList>
            <person name="Salanoubat M."/>
            <person name="Lemcke K."/>
            <person name="Rieger M."/>
            <person name="Ansorge W."/>
            <person name="Unseld M."/>
            <person name="Fartmann B."/>
            <person name="Valle G."/>
            <person name="Bloecker H."/>
            <person name="Perez-Alonso M."/>
            <person name="Obermaier B."/>
            <person name="Delseny M."/>
            <person name="Boutry M."/>
            <person name="Grivell L.A."/>
            <person name="Mache R."/>
            <person name="Puigdomenech P."/>
            <person name="De Simone V."/>
            <person name="Choisne N."/>
            <person name="Artiguenave F."/>
            <person name="Robert C."/>
            <person name="Brottier P."/>
            <person name="Wincker P."/>
            <person name="Cattolico L."/>
            <person name="Weissenbach J."/>
            <person name="Saurin W."/>
            <person name="Quetier F."/>
            <person name="Schaefer M."/>
            <person name="Mueller-Auer S."/>
            <person name="Gabel C."/>
            <person name="Fuchs M."/>
            <person name="Benes V."/>
            <person name="Wurmbach E."/>
            <person name="Drzonek H."/>
            <person name="Erfle H."/>
            <person name="Jordan N."/>
            <person name="Bangert S."/>
            <person name="Wiedelmann R."/>
            <person name="Kranz H."/>
            <person name="Voss H."/>
            <person name="Holland R."/>
            <person name="Brandt P."/>
            <person name="Nyakatura G."/>
            <person name="Vezzi A."/>
            <person name="D'Angelo M."/>
            <person name="Pallavicini A."/>
            <person name="Toppo S."/>
            <person name="Simionati B."/>
            <person name="Conrad A."/>
            <person name="Hornischer K."/>
            <person name="Kauer G."/>
            <person name="Loehnert T.-H."/>
            <person name="Nordsiek G."/>
            <person name="Reichelt J."/>
            <person name="Scharfe M."/>
            <person name="Schoen O."/>
            <person name="Bargues M."/>
            <person name="Terol J."/>
            <person name="Climent J."/>
            <person name="Navarro P."/>
            <person name="Collado C."/>
            <person name="Perez-Perez A."/>
            <person name="Ottenwaelder B."/>
            <person name="Duchemin D."/>
            <person name="Cooke R."/>
            <person name="Laudie M."/>
            <person name="Berger-Llauro C."/>
            <person name="Purnelle B."/>
            <person name="Masuy D."/>
            <person name="de Haan M."/>
            <person name="Maarse A.C."/>
            <person name="Alcaraz J.-P."/>
            <person name="Cottet A."/>
            <person name="Casacuberta E."/>
            <person name="Monfort A."/>
            <person name="Argiriou A."/>
            <person name="Flores M."/>
            <person name="Liguori R."/>
            <person name="Vitale D."/>
            <person name="Mannhaupt G."/>
            <person name="Haase D."/>
            <person name="Schoof H."/>
            <person name="Rudd S."/>
            <person name="Zaccaria P."/>
            <person name="Mewes H.-W."/>
            <person name="Mayer K.F.X."/>
            <person name="Kaul S."/>
            <person name="Town C.D."/>
            <person name="Koo H.L."/>
            <person name="Tallon L.J."/>
            <person name="Jenkins J."/>
            <person name="Rooney T."/>
            <person name="Rizzo M."/>
            <person name="Walts A."/>
            <person name="Utterback T."/>
            <person name="Fujii C.Y."/>
            <person name="Shea T.P."/>
            <person name="Creasy T.H."/>
            <person name="Haas B."/>
            <person name="Maiti R."/>
            <person name="Wu D."/>
            <person name="Peterson J."/>
            <person name="Van Aken S."/>
            <person name="Pai G."/>
            <person name="Militscher J."/>
            <person name="Sellers P."/>
            <person name="Gill J.E."/>
            <person name="Feldblyum T.V."/>
            <person name="Preuss D."/>
            <person name="Lin X."/>
            <person name="Nierman W.C."/>
            <person name="Salzberg S.L."/>
            <person name="White O."/>
            <person name="Venter J.C."/>
            <person name="Fraser C.M."/>
            <person name="Kaneko T."/>
            <person name="Nakamura Y."/>
            <person name="Sato S."/>
            <person name="Kato T."/>
            <person name="Asamizu E."/>
            <person name="Sasamoto S."/>
            <person name="Kimura T."/>
            <person name="Idesawa K."/>
            <person name="Kawashima K."/>
            <person name="Kishida Y."/>
            <person name="Kiyokawa C."/>
            <person name="Kohara M."/>
            <person name="Matsumoto M."/>
            <person name="Matsuno A."/>
            <person name="Muraki A."/>
            <person name="Nakayama S."/>
            <person name="Nakazaki N."/>
            <person name="Shinpo S."/>
            <person name="Takeuchi C."/>
            <person name="Wada T."/>
            <person name="Watanabe A."/>
            <person name="Yamada M."/>
            <person name="Yasuda M."/>
            <person name="Tabata S."/>
        </authorList>
    </citation>
    <scope>NUCLEOTIDE SEQUENCE [LARGE SCALE GENOMIC DNA]</scope>
    <source>
        <strain>cv. Columbia</strain>
    </source>
</reference>
<reference key="3">
    <citation type="journal article" date="2017" name="Plant J.">
        <title>Araport11: a complete reannotation of the Arabidopsis thaliana reference genome.</title>
        <authorList>
            <person name="Cheng C.Y."/>
            <person name="Krishnakumar V."/>
            <person name="Chan A.P."/>
            <person name="Thibaud-Nissen F."/>
            <person name="Schobel S."/>
            <person name="Town C.D."/>
        </authorList>
    </citation>
    <scope>GENOME REANNOTATION</scope>
    <source>
        <strain>cv. Columbia</strain>
    </source>
</reference>
<reference key="4">
    <citation type="submission" date="1997-09" db="EMBL/GenBank/DDBJ databases">
        <authorList>
            <person name="Baier K."/>
            <person name="Truernit E."/>
            <person name="Sauer N."/>
        </authorList>
    </citation>
    <scope>NUCLEOTIDE SEQUENCE [GENOMIC DNA] OF 400-467</scope>
    <source>
        <strain>cv. C24</strain>
    </source>
</reference>
<reference key="5">
    <citation type="journal article" date="2006" name="BMC Evol. Biol.">
        <title>The monosaccharide transporter gene family in land plants is ancient and shows differential subfamily expression and expansion across lineages.</title>
        <authorList>
            <person name="Johnson D.A."/>
            <person name="Hill J.P."/>
            <person name="Thomas M.A."/>
        </authorList>
    </citation>
    <scope>GENE FAMILY</scope>
</reference>
<proteinExistence type="evidence at protein level"/>
<accession>Q9SFG0</accession>
<accession>O81704</accession>
<organism>
    <name type="scientific">Arabidopsis thaliana</name>
    <name type="common">Mouse-ear cress</name>
    <dbReference type="NCBI Taxonomy" id="3702"/>
    <lineage>
        <taxon>Eukaryota</taxon>
        <taxon>Viridiplantae</taxon>
        <taxon>Streptophyta</taxon>
        <taxon>Embryophyta</taxon>
        <taxon>Tracheophyta</taxon>
        <taxon>Spermatophyta</taxon>
        <taxon>Magnoliopsida</taxon>
        <taxon>eudicotyledons</taxon>
        <taxon>Gunneridae</taxon>
        <taxon>Pentapetalae</taxon>
        <taxon>rosids</taxon>
        <taxon>malvids</taxon>
        <taxon>Brassicales</taxon>
        <taxon>Brassicaceae</taxon>
        <taxon>Camelineae</taxon>
        <taxon>Arabidopsis</taxon>
    </lineage>
</organism>
<comment type="function">
    <text evidence="2">Mediates an active uptake of hexoses, probably by sugar/hydrogen symport. Can transport glucose, 3-O-methylglucose, mannose, fructose and galactose, and, to a lower extent, xylose and ribulose.</text>
</comment>
<comment type="activity regulation">
    <text evidence="2">Inhibited by uncouplers such as 2,4-dinitrophenol and carbonyl cyanide-m-chlorophenyl-hydrazone.</text>
</comment>
<comment type="biophysicochemical properties">
    <kinetics>
        <KM evidence="2">20.5 uM for glucose (at pH 5.5)</KM>
    </kinetics>
</comment>
<comment type="subcellular location">
    <subcellularLocation>
        <location>Membrane</location>
        <topology>Multi-pass membrane protein</topology>
    </subcellularLocation>
</comment>
<comment type="tissue specificity">
    <text evidence="2">Pollen specific.</text>
</comment>
<comment type="developmental stage">
    <text evidence="2">First observed in pollen right before the opening of floral buds. Levels increase during pollen maturation.</text>
</comment>
<comment type="similarity">
    <text evidence="3">Belongs to the major facilitator superfamily. Sugar transporter (TC 2.A.1.1) family.</text>
</comment>